<reference key="1">
    <citation type="journal article" date="2009" name="J. Bacteriol.">
        <title>Complete and draft genome sequences of six members of the Aquificales.</title>
        <authorList>
            <person name="Reysenbach A.-L."/>
            <person name="Hamamura N."/>
            <person name="Podar M."/>
            <person name="Griffiths E."/>
            <person name="Ferreira S."/>
            <person name="Hochstein R."/>
            <person name="Heidelberg J."/>
            <person name="Johnson J."/>
            <person name="Mead D."/>
            <person name="Pohorille A."/>
            <person name="Sarmiento M."/>
            <person name="Schweighofer K."/>
            <person name="Seshadri R."/>
            <person name="Voytek M.A."/>
        </authorList>
    </citation>
    <scope>NUCLEOTIDE SEQUENCE [LARGE SCALE GENOMIC DNA]</scope>
    <source>
        <strain>Y04AAS1</strain>
    </source>
</reference>
<gene>
    <name evidence="1" type="primary">pdxJ</name>
    <name type="ordered locus">HY04AAS1_0646</name>
</gene>
<accession>B4U872</accession>
<organism>
    <name type="scientific">Hydrogenobaculum sp. (strain Y04AAS1)</name>
    <dbReference type="NCBI Taxonomy" id="380749"/>
    <lineage>
        <taxon>Bacteria</taxon>
        <taxon>Pseudomonadati</taxon>
        <taxon>Aquificota</taxon>
        <taxon>Aquificia</taxon>
        <taxon>Aquificales</taxon>
        <taxon>Aquificaceae</taxon>
        <taxon>Hydrogenobaculum</taxon>
    </lineage>
</organism>
<protein>
    <recommendedName>
        <fullName evidence="1">Pyridoxine 5'-phosphate synthase</fullName>
        <shortName evidence="1">PNP synthase</shortName>
        <ecNumber evidence="1">2.6.99.2</ecNumber>
    </recommendedName>
</protein>
<sequence>MRLGVNIDHVATIREARKTFEPSVLEAAFIAKRAGAHQITMHLREDRRHIKDEDVRLVRTSVEIPLNLEMAPTQEIKTIALEIKPQRVTLVPEKRQEVTTEGGLDILSNADYLKNYIKDFKENQIEVSFFIDPDLGQVEASKFTGADAIELHTGRFAESFHKRDFRLLEEEKNRLRKAATLARELGLNVYAGHGITYQNIHLILDLKGLIEELNIGHSIISNAVLFGLEKAITKMLGIIS</sequence>
<comment type="function">
    <text evidence="1">Catalyzes the complicated ring closure reaction between the two acyclic compounds 1-deoxy-D-xylulose-5-phosphate (DXP) and 3-amino-2-oxopropyl phosphate (1-amino-acetone-3-phosphate or AAP) to form pyridoxine 5'-phosphate (PNP) and inorganic phosphate.</text>
</comment>
<comment type="catalytic activity">
    <reaction evidence="1">
        <text>3-amino-2-oxopropyl phosphate + 1-deoxy-D-xylulose 5-phosphate = pyridoxine 5'-phosphate + phosphate + 2 H2O + H(+)</text>
        <dbReference type="Rhea" id="RHEA:15265"/>
        <dbReference type="ChEBI" id="CHEBI:15377"/>
        <dbReference type="ChEBI" id="CHEBI:15378"/>
        <dbReference type="ChEBI" id="CHEBI:43474"/>
        <dbReference type="ChEBI" id="CHEBI:57279"/>
        <dbReference type="ChEBI" id="CHEBI:57792"/>
        <dbReference type="ChEBI" id="CHEBI:58589"/>
        <dbReference type="EC" id="2.6.99.2"/>
    </reaction>
</comment>
<comment type="pathway">
    <text evidence="1">Cofactor biosynthesis; pyridoxine 5'-phosphate biosynthesis; pyridoxine 5'-phosphate from D-erythrose 4-phosphate: step 5/5.</text>
</comment>
<comment type="subunit">
    <text evidence="1">Homooctamer; tetramer of dimers.</text>
</comment>
<comment type="subcellular location">
    <subcellularLocation>
        <location evidence="1">Cytoplasm</location>
    </subcellularLocation>
</comment>
<comment type="similarity">
    <text evidence="1">Belongs to the PNP synthase family.</text>
</comment>
<feature type="chain" id="PRO_1000119381" description="Pyridoxine 5'-phosphate synthase">
    <location>
        <begin position="1"/>
        <end position="240"/>
    </location>
</feature>
<feature type="active site" description="Proton acceptor" evidence="1">
    <location>
        <position position="42"/>
    </location>
</feature>
<feature type="active site" description="Proton acceptor" evidence="1">
    <location>
        <position position="69"/>
    </location>
</feature>
<feature type="active site" description="Proton donor" evidence="1">
    <location>
        <position position="193"/>
    </location>
</feature>
<feature type="binding site" evidence="1">
    <location>
        <position position="6"/>
    </location>
    <ligand>
        <name>3-amino-2-oxopropyl phosphate</name>
        <dbReference type="ChEBI" id="CHEBI:57279"/>
    </ligand>
</feature>
<feature type="binding site" evidence="1">
    <location>
        <begin position="8"/>
        <end position="9"/>
    </location>
    <ligand>
        <name>1-deoxy-D-xylulose 5-phosphate</name>
        <dbReference type="ChEBI" id="CHEBI:57792"/>
    </ligand>
</feature>
<feature type="binding site" evidence="1">
    <location>
        <position position="17"/>
    </location>
    <ligand>
        <name>3-amino-2-oxopropyl phosphate</name>
        <dbReference type="ChEBI" id="CHEBI:57279"/>
    </ligand>
</feature>
<feature type="binding site" evidence="1">
    <location>
        <position position="44"/>
    </location>
    <ligand>
        <name>1-deoxy-D-xylulose 5-phosphate</name>
        <dbReference type="ChEBI" id="CHEBI:57792"/>
    </ligand>
</feature>
<feature type="binding site" evidence="1">
    <location>
        <position position="49"/>
    </location>
    <ligand>
        <name>1-deoxy-D-xylulose 5-phosphate</name>
        <dbReference type="ChEBI" id="CHEBI:57792"/>
    </ligand>
</feature>
<feature type="binding site" evidence="1">
    <location>
        <position position="99"/>
    </location>
    <ligand>
        <name>1-deoxy-D-xylulose 5-phosphate</name>
        <dbReference type="ChEBI" id="CHEBI:57792"/>
    </ligand>
</feature>
<feature type="binding site" evidence="1">
    <location>
        <position position="194"/>
    </location>
    <ligand>
        <name>3-amino-2-oxopropyl phosphate</name>
        <dbReference type="ChEBI" id="CHEBI:57279"/>
    </ligand>
</feature>
<feature type="binding site" evidence="1">
    <location>
        <begin position="216"/>
        <end position="217"/>
    </location>
    <ligand>
        <name>3-amino-2-oxopropyl phosphate</name>
        <dbReference type="ChEBI" id="CHEBI:57279"/>
    </ligand>
</feature>
<feature type="site" description="Transition state stabilizer" evidence="1">
    <location>
        <position position="150"/>
    </location>
</feature>
<proteinExistence type="inferred from homology"/>
<name>PDXJ_HYDS0</name>
<dbReference type="EC" id="2.6.99.2" evidence="1"/>
<dbReference type="EMBL" id="CP001130">
    <property type="protein sequence ID" value="ACG57333.1"/>
    <property type="molecule type" value="Genomic_DNA"/>
</dbReference>
<dbReference type="RefSeq" id="WP_012513689.1">
    <property type="nucleotide sequence ID" value="NC_011126.1"/>
</dbReference>
<dbReference type="SMR" id="B4U872"/>
<dbReference type="STRING" id="380749.HY04AAS1_0646"/>
<dbReference type="KEGG" id="hya:HY04AAS1_0646"/>
<dbReference type="eggNOG" id="COG0854">
    <property type="taxonomic scope" value="Bacteria"/>
</dbReference>
<dbReference type="HOGENOM" id="CLU_074563_0_0_0"/>
<dbReference type="OrthoDB" id="9806590at2"/>
<dbReference type="UniPathway" id="UPA00244">
    <property type="reaction ID" value="UER00313"/>
</dbReference>
<dbReference type="GO" id="GO:0005829">
    <property type="term" value="C:cytosol"/>
    <property type="evidence" value="ECO:0007669"/>
    <property type="project" value="TreeGrafter"/>
</dbReference>
<dbReference type="GO" id="GO:0033856">
    <property type="term" value="F:pyridoxine 5'-phosphate synthase activity"/>
    <property type="evidence" value="ECO:0007669"/>
    <property type="project" value="UniProtKB-EC"/>
</dbReference>
<dbReference type="GO" id="GO:0008615">
    <property type="term" value="P:pyridoxine biosynthetic process"/>
    <property type="evidence" value="ECO:0007669"/>
    <property type="project" value="UniProtKB-UniRule"/>
</dbReference>
<dbReference type="CDD" id="cd00003">
    <property type="entry name" value="PNPsynthase"/>
    <property type="match status" value="1"/>
</dbReference>
<dbReference type="Gene3D" id="3.20.20.70">
    <property type="entry name" value="Aldolase class I"/>
    <property type="match status" value="1"/>
</dbReference>
<dbReference type="HAMAP" id="MF_00279">
    <property type="entry name" value="PdxJ"/>
    <property type="match status" value="1"/>
</dbReference>
<dbReference type="InterPro" id="IPR013785">
    <property type="entry name" value="Aldolase_TIM"/>
</dbReference>
<dbReference type="InterPro" id="IPR004569">
    <property type="entry name" value="PyrdxlP_synth_PdxJ"/>
</dbReference>
<dbReference type="InterPro" id="IPR036130">
    <property type="entry name" value="Pyridoxine-5'_phos_synth"/>
</dbReference>
<dbReference type="NCBIfam" id="TIGR00559">
    <property type="entry name" value="pdxJ"/>
    <property type="match status" value="1"/>
</dbReference>
<dbReference type="NCBIfam" id="NF003625">
    <property type="entry name" value="PRK05265.1-3"/>
    <property type="match status" value="1"/>
</dbReference>
<dbReference type="NCBIfam" id="NF003627">
    <property type="entry name" value="PRK05265.1-5"/>
    <property type="match status" value="1"/>
</dbReference>
<dbReference type="PANTHER" id="PTHR30456">
    <property type="entry name" value="PYRIDOXINE 5'-PHOSPHATE SYNTHASE"/>
    <property type="match status" value="1"/>
</dbReference>
<dbReference type="PANTHER" id="PTHR30456:SF0">
    <property type="entry name" value="PYRIDOXINE 5'-PHOSPHATE SYNTHASE"/>
    <property type="match status" value="1"/>
</dbReference>
<dbReference type="Pfam" id="PF03740">
    <property type="entry name" value="PdxJ"/>
    <property type="match status" value="1"/>
</dbReference>
<dbReference type="SUPFAM" id="SSF63892">
    <property type="entry name" value="Pyridoxine 5'-phosphate synthase"/>
    <property type="match status" value="1"/>
</dbReference>
<evidence type="ECO:0000255" key="1">
    <source>
        <dbReference type="HAMAP-Rule" id="MF_00279"/>
    </source>
</evidence>
<keyword id="KW-0963">Cytoplasm</keyword>
<keyword id="KW-0664">Pyridoxine biosynthesis</keyword>
<keyword id="KW-0808">Transferase</keyword>